<feature type="chain" id="PRO_1000191388" description="Large-conductance mechanosensitive channel">
    <location>
        <begin position="1"/>
        <end position="136"/>
    </location>
</feature>
<feature type="transmembrane region" description="Helical" evidence="1">
    <location>
        <begin position="9"/>
        <end position="29"/>
    </location>
</feature>
<feature type="transmembrane region" description="Helical" evidence="1">
    <location>
        <begin position="32"/>
        <end position="52"/>
    </location>
</feature>
<feature type="transmembrane region" description="Helical" evidence="1">
    <location>
        <begin position="54"/>
        <end position="74"/>
    </location>
</feature>
<feature type="transmembrane region" description="Helical" evidence="1">
    <location>
        <begin position="79"/>
        <end position="99"/>
    </location>
</feature>
<evidence type="ECO:0000255" key="1">
    <source>
        <dbReference type="HAMAP-Rule" id="MF_00115"/>
    </source>
</evidence>
<organism>
    <name type="scientific">Vibrio cholerae serotype O1 (strain M66-2)</name>
    <dbReference type="NCBI Taxonomy" id="579112"/>
    <lineage>
        <taxon>Bacteria</taxon>
        <taxon>Pseudomonadati</taxon>
        <taxon>Pseudomonadota</taxon>
        <taxon>Gammaproteobacteria</taxon>
        <taxon>Vibrionales</taxon>
        <taxon>Vibrionaceae</taxon>
        <taxon>Vibrio</taxon>
    </lineage>
</organism>
<proteinExistence type="inferred from homology"/>
<protein>
    <recommendedName>
        <fullName evidence="1">Large-conductance mechanosensitive channel</fullName>
    </recommendedName>
</protein>
<reference key="1">
    <citation type="journal article" date="2008" name="PLoS ONE">
        <title>A recalibrated molecular clock and independent origins for the cholera pandemic clones.</title>
        <authorList>
            <person name="Feng L."/>
            <person name="Reeves P.R."/>
            <person name="Lan R."/>
            <person name="Ren Y."/>
            <person name="Gao C."/>
            <person name="Zhou Z."/>
            <person name="Ren Y."/>
            <person name="Cheng J."/>
            <person name="Wang W."/>
            <person name="Wang J."/>
            <person name="Qian W."/>
            <person name="Li D."/>
            <person name="Wang L."/>
        </authorList>
    </citation>
    <scope>NUCLEOTIDE SEQUENCE [LARGE SCALE GENOMIC DNA]</scope>
    <source>
        <strain>M66-2</strain>
    </source>
</reference>
<gene>
    <name evidence="1" type="primary">mscL</name>
    <name type="ordered locus">VCM66_A0570</name>
</gene>
<keyword id="KW-0997">Cell inner membrane</keyword>
<keyword id="KW-1003">Cell membrane</keyword>
<keyword id="KW-0407">Ion channel</keyword>
<keyword id="KW-0406">Ion transport</keyword>
<keyword id="KW-0472">Membrane</keyword>
<keyword id="KW-0812">Transmembrane</keyword>
<keyword id="KW-1133">Transmembrane helix</keyword>
<keyword id="KW-0813">Transport</keyword>
<dbReference type="EMBL" id="CP001234">
    <property type="protein sequence ID" value="ACP07532.1"/>
    <property type="molecule type" value="Genomic_DNA"/>
</dbReference>
<dbReference type="RefSeq" id="WP_000054763.1">
    <property type="nucleotide sequence ID" value="NC_012580.1"/>
</dbReference>
<dbReference type="SMR" id="C3LVM7"/>
<dbReference type="KEGG" id="vcm:VCM66_A0570"/>
<dbReference type="HOGENOM" id="CLU_095787_0_0_6"/>
<dbReference type="Proteomes" id="UP000001217">
    <property type="component" value="Chromosome II"/>
</dbReference>
<dbReference type="GO" id="GO:0005886">
    <property type="term" value="C:plasma membrane"/>
    <property type="evidence" value="ECO:0007669"/>
    <property type="project" value="UniProtKB-SubCell"/>
</dbReference>
<dbReference type="GO" id="GO:0008381">
    <property type="term" value="F:mechanosensitive monoatomic ion channel activity"/>
    <property type="evidence" value="ECO:0007669"/>
    <property type="project" value="UniProtKB-UniRule"/>
</dbReference>
<dbReference type="FunFam" id="1.10.1200.120:FF:000001">
    <property type="entry name" value="Large-conductance mechanosensitive channel"/>
    <property type="match status" value="1"/>
</dbReference>
<dbReference type="Gene3D" id="1.10.1200.120">
    <property type="entry name" value="Large-conductance mechanosensitive channel, MscL, domain 1"/>
    <property type="match status" value="1"/>
</dbReference>
<dbReference type="HAMAP" id="MF_00115">
    <property type="entry name" value="MscL"/>
    <property type="match status" value="1"/>
</dbReference>
<dbReference type="InterPro" id="IPR019823">
    <property type="entry name" value="Mechanosensitive_channel_CS"/>
</dbReference>
<dbReference type="InterPro" id="IPR001185">
    <property type="entry name" value="MS_channel"/>
</dbReference>
<dbReference type="InterPro" id="IPR037673">
    <property type="entry name" value="MSC/AndL"/>
</dbReference>
<dbReference type="InterPro" id="IPR036019">
    <property type="entry name" value="MscL_channel"/>
</dbReference>
<dbReference type="NCBIfam" id="TIGR00220">
    <property type="entry name" value="mscL"/>
    <property type="match status" value="1"/>
</dbReference>
<dbReference type="NCBIfam" id="NF001843">
    <property type="entry name" value="PRK00567.1-4"/>
    <property type="match status" value="1"/>
</dbReference>
<dbReference type="PANTHER" id="PTHR30266:SF2">
    <property type="entry name" value="LARGE-CONDUCTANCE MECHANOSENSITIVE CHANNEL"/>
    <property type="match status" value="1"/>
</dbReference>
<dbReference type="PANTHER" id="PTHR30266">
    <property type="entry name" value="MECHANOSENSITIVE CHANNEL MSCL"/>
    <property type="match status" value="1"/>
</dbReference>
<dbReference type="Pfam" id="PF01741">
    <property type="entry name" value="MscL"/>
    <property type="match status" value="1"/>
</dbReference>
<dbReference type="PRINTS" id="PR01264">
    <property type="entry name" value="MECHCHANNEL"/>
</dbReference>
<dbReference type="SUPFAM" id="SSF81330">
    <property type="entry name" value="Gated mechanosensitive channel"/>
    <property type="match status" value="1"/>
</dbReference>
<dbReference type="PROSITE" id="PS01327">
    <property type="entry name" value="MSCL"/>
    <property type="match status" value="1"/>
</dbReference>
<sequence>MSLLKEFKAFASRGNVIDMAVGIIIGAAFGKIVSSFVADIIMPPIGIILGGVNFSDLSFVLLAAQGDAPAVVIAYGKFIQTVVDFTIIAFAIFMGLKAINSLKRKEEEAPKAPPAPTKDQELLSEIRDLLKAQQDK</sequence>
<accession>C3LVM7</accession>
<comment type="function">
    <text evidence="1">Channel that opens in response to stretch forces in the membrane lipid bilayer. May participate in the regulation of osmotic pressure changes within the cell.</text>
</comment>
<comment type="subunit">
    <text evidence="1">Homopentamer.</text>
</comment>
<comment type="subcellular location">
    <subcellularLocation>
        <location evidence="1">Cell inner membrane</location>
        <topology evidence="1">Multi-pass membrane protein</topology>
    </subcellularLocation>
</comment>
<comment type="similarity">
    <text evidence="1">Belongs to the MscL family.</text>
</comment>
<name>MSCL_VIBCM</name>